<reference key="1">
    <citation type="journal article" date="2003" name="DNA Res.">
        <title>Complete genome structure of Gloeobacter violaceus PCC 7421, a cyanobacterium that lacks thylakoids.</title>
        <authorList>
            <person name="Nakamura Y."/>
            <person name="Kaneko T."/>
            <person name="Sato S."/>
            <person name="Mimuro M."/>
            <person name="Miyashita H."/>
            <person name="Tsuchiya T."/>
            <person name="Sasamoto S."/>
            <person name="Watanabe A."/>
            <person name="Kawashima K."/>
            <person name="Kishida Y."/>
            <person name="Kiyokawa C."/>
            <person name="Kohara M."/>
            <person name="Matsumoto M."/>
            <person name="Matsuno A."/>
            <person name="Nakazaki N."/>
            <person name="Shimpo S."/>
            <person name="Takeuchi C."/>
            <person name="Yamada M."/>
            <person name="Tabata S."/>
        </authorList>
    </citation>
    <scope>NUCLEOTIDE SEQUENCE [LARGE SCALE GENOMIC DNA]</scope>
    <source>
        <strain>ATCC 29082 / PCC 7421</strain>
    </source>
</reference>
<comment type="catalytic activity">
    <reaction evidence="1">
        <text>D-erythro-1-(imidazol-4-yl)glycerol 3-phosphate = 3-(imidazol-4-yl)-2-oxopropyl phosphate + H2O</text>
        <dbReference type="Rhea" id="RHEA:11040"/>
        <dbReference type="ChEBI" id="CHEBI:15377"/>
        <dbReference type="ChEBI" id="CHEBI:57766"/>
        <dbReference type="ChEBI" id="CHEBI:58278"/>
        <dbReference type="EC" id="4.2.1.19"/>
    </reaction>
</comment>
<comment type="pathway">
    <text evidence="1">Amino-acid biosynthesis; L-histidine biosynthesis; L-histidine from 5-phospho-alpha-D-ribose 1-diphosphate: step 6/9.</text>
</comment>
<comment type="subcellular location">
    <subcellularLocation>
        <location evidence="1">Cytoplasm</location>
    </subcellularLocation>
</comment>
<comment type="similarity">
    <text evidence="1">Belongs to the imidazoleglycerol-phosphate dehydratase family.</text>
</comment>
<evidence type="ECO:0000255" key="1">
    <source>
        <dbReference type="HAMAP-Rule" id="MF_00076"/>
    </source>
</evidence>
<proteinExistence type="inferred from homology"/>
<protein>
    <recommendedName>
        <fullName evidence="1">Imidazoleglycerol-phosphate dehydratase</fullName>
        <shortName evidence="1">IGPD</shortName>
        <ecNumber evidence="1">4.2.1.19</ecNumber>
    </recommendedName>
</protein>
<organism>
    <name type="scientific">Gloeobacter violaceus (strain ATCC 29082 / PCC 7421)</name>
    <dbReference type="NCBI Taxonomy" id="251221"/>
    <lineage>
        <taxon>Bacteria</taxon>
        <taxon>Bacillati</taxon>
        <taxon>Cyanobacteriota</taxon>
        <taxon>Cyanophyceae</taxon>
        <taxon>Gloeobacterales</taxon>
        <taxon>Gloeobacteraceae</taxon>
        <taxon>Gloeobacter</taxon>
    </lineage>
</organism>
<dbReference type="EC" id="4.2.1.19" evidence="1"/>
<dbReference type="EMBL" id="BA000045">
    <property type="protein sequence ID" value="BAC88710.1"/>
    <property type="molecule type" value="Genomic_DNA"/>
</dbReference>
<dbReference type="RefSeq" id="NP_923715.1">
    <property type="nucleotide sequence ID" value="NC_005125.1"/>
</dbReference>
<dbReference type="RefSeq" id="WP_011140771.1">
    <property type="nucleotide sequence ID" value="NC_005125.1"/>
</dbReference>
<dbReference type="SMR" id="Q7NMJ6"/>
<dbReference type="FunCoup" id="Q7NMJ6">
    <property type="interactions" value="174"/>
</dbReference>
<dbReference type="STRING" id="251221.gene:10758246"/>
<dbReference type="EnsemblBacteria" id="BAC88710">
    <property type="protein sequence ID" value="BAC88710"/>
    <property type="gene ID" value="BAC88710"/>
</dbReference>
<dbReference type="KEGG" id="gvi:gll0769"/>
<dbReference type="PATRIC" id="fig|251221.4.peg.784"/>
<dbReference type="eggNOG" id="COG0131">
    <property type="taxonomic scope" value="Bacteria"/>
</dbReference>
<dbReference type="HOGENOM" id="CLU_044308_3_0_3"/>
<dbReference type="InParanoid" id="Q7NMJ6"/>
<dbReference type="OrthoDB" id="9790411at2"/>
<dbReference type="PhylomeDB" id="Q7NMJ6"/>
<dbReference type="UniPathway" id="UPA00031">
    <property type="reaction ID" value="UER00011"/>
</dbReference>
<dbReference type="Proteomes" id="UP000000557">
    <property type="component" value="Chromosome"/>
</dbReference>
<dbReference type="GO" id="GO:0005737">
    <property type="term" value="C:cytoplasm"/>
    <property type="evidence" value="ECO:0007669"/>
    <property type="project" value="UniProtKB-SubCell"/>
</dbReference>
<dbReference type="GO" id="GO:0004424">
    <property type="term" value="F:imidazoleglycerol-phosphate dehydratase activity"/>
    <property type="evidence" value="ECO:0000318"/>
    <property type="project" value="GO_Central"/>
</dbReference>
<dbReference type="GO" id="GO:0000105">
    <property type="term" value="P:L-histidine biosynthetic process"/>
    <property type="evidence" value="ECO:0000318"/>
    <property type="project" value="GO_Central"/>
</dbReference>
<dbReference type="CDD" id="cd07914">
    <property type="entry name" value="IGPD"/>
    <property type="match status" value="1"/>
</dbReference>
<dbReference type="FunFam" id="3.30.230.40:FF:000002">
    <property type="entry name" value="Imidazoleglycerol-phosphate dehydratase"/>
    <property type="match status" value="1"/>
</dbReference>
<dbReference type="FunFam" id="3.30.230.40:FF:000003">
    <property type="entry name" value="Imidazoleglycerol-phosphate dehydratase HisB"/>
    <property type="match status" value="1"/>
</dbReference>
<dbReference type="Gene3D" id="3.30.230.40">
    <property type="entry name" value="Imidazole glycerol phosphate dehydratase, domain 1"/>
    <property type="match status" value="2"/>
</dbReference>
<dbReference type="HAMAP" id="MF_00076">
    <property type="entry name" value="HisB"/>
    <property type="match status" value="1"/>
</dbReference>
<dbReference type="InterPro" id="IPR038494">
    <property type="entry name" value="IGPD_sf"/>
</dbReference>
<dbReference type="InterPro" id="IPR000807">
    <property type="entry name" value="ImidazoleglycerolP_deHydtase"/>
</dbReference>
<dbReference type="InterPro" id="IPR020565">
    <property type="entry name" value="ImidazoleglycerP_deHydtase_CS"/>
</dbReference>
<dbReference type="InterPro" id="IPR020568">
    <property type="entry name" value="Ribosomal_Su5_D2-typ_SF"/>
</dbReference>
<dbReference type="NCBIfam" id="NF002108">
    <property type="entry name" value="PRK00951.1-3"/>
    <property type="match status" value="1"/>
</dbReference>
<dbReference type="NCBIfam" id="NF002109">
    <property type="entry name" value="PRK00951.1-5"/>
    <property type="match status" value="1"/>
</dbReference>
<dbReference type="NCBIfam" id="NF002111">
    <property type="entry name" value="PRK00951.2-1"/>
    <property type="match status" value="1"/>
</dbReference>
<dbReference type="NCBIfam" id="NF002114">
    <property type="entry name" value="PRK00951.2-4"/>
    <property type="match status" value="1"/>
</dbReference>
<dbReference type="PANTHER" id="PTHR23133:SF2">
    <property type="entry name" value="IMIDAZOLEGLYCEROL-PHOSPHATE DEHYDRATASE"/>
    <property type="match status" value="1"/>
</dbReference>
<dbReference type="PANTHER" id="PTHR23133">
    <property type="entry name" value="IMIDAZOLEGLYCEROL-PHOSPHATE DEHYDRATASE HIS7"/>
    <property type="match status" value="1"/>
</dbReference>
<dbReference type="Pfam" id="PF00475">
    <property type="entry name" value="IGPD"/>
    <property type="match status" value="1"/>
</dbReference>
<dbReference type="SUPFAM" id="SSF54211">
    <property type="entry name" value="Ribosomal protein S5 domain 2-like"/>
    <property type="match status" value="2"/>
</dbReference>
<dbReference type="PROSITE" id="PS00954">
    <property type="entry name" value="IGP_DEHYDRATASE_1"/>
    <property type="match status" value="1"/>
</dbReference>
<dbReference type="PROSITE" id="PS00955">
    <property type="entry name" value="IGP_DEHYDRATASE_2"/>
    <property type="match status" value="1"/>
</dbReference>
<accession>Q7NMJ6</accession>
<keyword id="KW-0028">Amino-acid biosynthesis</keyword>
<keyword id="KW-0963">Cytoplasm</keyword>
<keyword id="KW-0368">Histidine biosynthesis</keyword>
<keyword id="KW-0456">Lyase</keyword>
<keyword id="KW-1185">Reference proteome</keyword>
<name>HIS7_GLOVI</name>
<gene>
    <name evidence="1" type="primary">hisB</name>
    <name type="ordered locus">gll0769</name>
</gene>
<feature type="chain" id="PRO_0000158132" description="Imidazoleglycerol-phosphate dehydratase">
    <location>
        <begin position="1"/>
        <end position="197"/>
    </location>
</feature>
<sequence>MEPRIASTVRTTRETDIQIRLDLDGTGRVQAETGVPFLDHMLAQIATHGLIDIDVSAQGDLHIDDHHTNEDVGIAFGQCLAKALGDKRGISRFGHFAAPLDEALVQVVLDLSGRPHLSYGLEIPTQRVGSYDTQLVREFYQAVVNNSSMTLHLRQWAGINSHHIIEASFKAFARALRLAVEIDPRRAGSLPSSKGAL</sequence>